<proteinExistence type="inferred from homology"/>
<name>PGLRX_NEOFI</name>
<organism>
    <name type="scientific">Neosartorya fischeri (strain ATCC 1020 / DSM 3700 / CBS 544.65 / FGSC A1164 / JCM 1740 / NRRL 181 / WB 181)</name>
    <name type="common">Aspergillus fischerianus</name>
    <dbReference type="NCBI Taxonomy" id="331117"/>
    <lineage>
        <taxon>Eukaryota</taxon>
        <taxon>Fungi</taxon>
        <taxon>Dikarya</taxon>
        <taxon>Ascomycota</taxon>
        <taxon>Pezizomycotina</taxon>
        <taxon>Eurotiomycetes</taxon>
        <taxon>Eurotiomycetidae</taxon>
        <taxon>Eurotiales</taxon>
        <taxon>Aspergillaceae</taxon>
        <taxon>Aspergillus</taxon>
        <taxon>Aspergillus subgen. Fumigati</taxon>
    </lineage>
</organism>
<feature type="signal peptide" evidence="2">
    <location>
        <begin position="1"/>
        <end position="23"/>
    </location>
</feature>
<feature type="chain" id="PRO_0000393671" description="Probable exopolygalacturonase X">
    <location>
        <begin position="24"/>
        <end position="432"/>
    </location>
</feature>
<feature type="repeat" description="PbH1 1">
    <location>
        <begin position="231"/>
        <end position="252"/>
    </location>
</feature>
<feature type="repeat" description="PbH1 2">
    <location>
        <begin position="254"/>
        <end position="274"/>
    </location>
</feature>
<feature type="repeat" description="PbH1 3">
    <location>
        <begin position="285"/>
        <end position="306"/>
    </location>
</feature>
<feature type="repeat" description="PbH1 4">
    <location>
        <begin position="327"/>
        <end position="348"/>
    </location>
</feature>
<feature type="repeat" description="PbH1 5">
    <location>
        <begin position="362"/>
        <end position="394"/>
    </location>
</feature>
<feature type="active site" description="Proton donor" evidence="3">
    <location>
        <position position="245"/>
    </location>
</feature>
<feature type="active site" evidence="3">
    <location>
        <position position="268"/>
    </location>
</feature>
<feature type="glycosylation site" description="N-linked (GlcNAc...) asparagine" evidence="2">
    <location>
        <position position="113"/>
    </location>
</feature>
<feature type="glycosylation site" description="N-linked (GlcNAc...) asparagine" evidence="2">
    <location>
        <position position="129"/>
    </location>
</feature>
<feature type="glycosylation site" description="N-linked (GlcNAc...) asparagine" evidence="2">
    <location>
        <position position="199"/>
    </location>
</feature>
<feature type="glycosylation site" description="N-linked (GlcNAc...) asparagine" evidence="2">
    <location>
        <position position="253"/>
    </location>
</feature>
<feature type="glycosylation site" description="N-linked (GlcNAc...) asparagine" evidence="2">
    <location>
        <position position="265"/>
    </location>
</feature>
<feature type="glycosylation site" description="N-linked (GlcNAc...) asparagine" evidence="2">
    <location>
        <position position="292"/>
    </location>
</feature>
<feature type="glycosylation site" description="N-linked (GlcNAc...) asparagine" evidence="2">
    <location>
        <position position="297"/>
    </location>
</feature>
<feature type="glycosylation site" description="N-linked (GlcNAc...) asparagine" evidence="2">
    <location>
        <position position="329"/>
    </location>
</feature>
<feature type="glycosylation site" description="N-linked (GlcNAc...) asparagine" evidence="2">
    <location>
        <position position="354"/>
    </location>
</feature>
<feature type="glycosylation site" description="N-linked (GlcNAc...) asparagine" evidence="2">
    <location>
        <position position="364"/>
    </location>
</feature>
<feature type="disulfide bond" evidence="1">
    <location>
        <begin position="247"/>
        <end position="264"/>
    </location>
</feature>
<feature type="disulfide bond" evidence="1">
    <location>
        <begin position="392"/>
        <end position="398"/>
    </location>
</feature>
<sequence>MKFSYSFVQVVSLLLSLSPSVEGFTRSRNDACKPNHPFRPLPPSQPRTKTCHVVSNGHGKDDSKNIMQALHKCNNGGKVVFDANKVYTVGTALDMTFLKHIDLEVLGKIQFTNDTDYWQAHSFKHGFQNATTFFQLGGQDVNVYGGGTFDGNGQVWYDLYAEDALILRPILFGIIGLKGGTIGPLKLRYSPQWYQLVANSSDVIFDGIDISGYSSSKNEAKNTDGWDTYRSDNIVIQNSVINNGDDCVSFKPNSTNIIVQNLHCNGSHGISVGSLGQYKGEVDIVQNVLVYNISMYNASDGARIKVWPGVSSAMSEDLQGGGGLGSVKNITYNQMYIENVDWAIEVTQCYGQKNLTLCNEHPSNLTISDIHFKNFRGTTSGKRDPDVGTIVCSSPNVCSDIHAENINVKSPKGTDEFVCTNVDKSLLDVNCA</sequence>
<gene>
    <name type="primary">pgaX</name>
    <name type="ORF">NFIA_049320</name>
</gene>
<evidence type="ECO:0000250" key="1"/>
<evidence type="ECO:0000255" key="2"/>
<evidence type="ECO:0000255" key="3">
    <source>
        <dbReference type="PROSITE-ProRule" id="PRU10052"/>
    </source>
</evidence>
<evidence type="ECO:0000305" key="4"/>
<keyword id="KW-0961">Cell wall biogenesis/degradation</keyword>
<keyword id="KW-1015">Disulfide bond</keyword>
<keyword id="KW-0325">Glycoprotein</keyword>
<keyword id="KW-0326">Glycosidase</keyword>
<keyword id="KW-0378">Hydrolase</keyword>
<keyword id="KW-1185">Reference proteome</keyword>
<keyword id="KW-0677">Repeat</keyword>
<keyword id="KW-0964">Secreted</keyword>
<keyword id="KW-0732">Signal</keyword>
<protein>
    <recommendedName>
        <fullName>Probable exopolygalacturonase X</fullName>
        <shortName>ExoPG</shortName>
        <ecNumber>3.2.1.67</ecNumber>
    </recommendedName>
    <alternativeName>
        <fullName>Galacturan 1,4-alpha-galacturonidase</fullName>
    </alternativeName>
    <alternativeName>
        <fullName>Poly(1,4-alpha-D-galacturonide)galacturonohydrolase</fullName>
    </alternativeName>
</protein>
<comment type="function">
    <text evidence="1">Specific in hydrolyzing the terminal glycosidic bond of polygalacturonic acid and oligogalacturonates.</text>
</comment>
<comment type="catalytic activity">
    <reaction>
        <text>[(1-&gt;4)-alpha-D-galacturonosyl](n) + H2O = alpha-D-galacturonate + [(1-&gt;4)-alpha-D-galacturonosyl](n-1)</text>
        <dbReference type="Rhea" id="RHEA:14117"/>
        <dbReference type="Rhea" id="RHEA-COMP:14570"/>
        <dbReference type="Rhea" id="RHEA-COMP:14572"/>
        <dbReference type="ChEBI" id="CHEBI:15377"/>
        <dbReference type="ChEBI" id="CHEBI:58658"/>
        <dbReference type="ChEBI" id="CHEBI:140523"/>
        <dbReference type="EC" id="3.2.1.67"/>
    </reaction>
</comment>
<comment type="subcellular location">
    <subcellularLocation>
        <location evidence="1">Secreted</location>
    </subcellularLocation>
</comment>
<comment type="similarity">
    <text evidence="4">Belongs to the glycosyl hydrolase 28 family.</text>
</comment>
<comment type="sequence caution" evidence="4">
    <conflict type="erroneous gene model prediction">
        <sequence resource="EMBL-CDS" id="EAW15592"/>
    </conflict>
</comment>
<accession>A1DLC1</accession>
<dbReference type="EC" id="3.2.1.67"/>
<dbReference type="EMBL" id="DS027698">
    <property type="protein sequence ID" value="EAW15592.1"/>
    <property type="status" value="ALT_SEQ"/>
    <property type="molecule type" value="Genomic_DNA"/>
</dbReference>
<dbReference type="RefSeq" id="XP_001257489.1">
    <property type="nucleotide sequence ID" value="XM_001257488.1"/>
</dbReference>
<dbReference type="SMR" id="A1DLC1"/>
<dbReference type="STRING" id="331117.A1DLC1"/>
<dbReference type="GlyCosmos" id="A1DLC1">
    <property type="glycosylation" value="10 sites, No reported glycans"/>
</dbReference>
<dbReference type="GeneID" id="4584003"/>
<dbReference type="KEGG" id="nfi:NFIA_049320"/>
<dbReference type="VEuPathDB" id="FungiDB:NFIA_049320"/>
<dbReference type="eggNOG" id="ENOG502QPPR">
    <property type="taxonomic scope" value="Eukaryota"/>
</dbReference>
<dbReference type="OrthoDB" id="187139at2759"/>
<dbReference type="Proteomes" id="UP000006702">
    <property type="component" value="Unassembled WGS sequence"/>
</dbReference>
<dbReference type="GO" id="GO:0005576">
    <property type="term" value="C:extracellular region"/>
    <property type="evidence" value="ECO:0000250"/>
    <property type="project" value="UniProtKB"/>
</dbReference>
<dbReference type="GO" id="GO:0047911">
    <property type="term" value="F:galacturan 1,4-alpha-galacturonidase activity"/>
    <property type="evidence" value="ECO:0007669"/>
    <property type="project" value="UniProtKB-EC"/>
</dbReference>
<dbReference type="GO" id="GO:0004650">
    <property type="term" value="F:polygalacturonase activity"/>
    <property type="evidence" value="ECO:0000250"/>
    <property type="project" value="UniProtKB"/>
</dbReference>
<dbReference type="GO" id="GO:0071555">
    <property type="term" value="P:cell wall organization"/>
    <property type="evidence" value="ECO:0007669"/>
    <property type="project" value="UniProtKB-KW"/>
</dbReference>
<dbReference type="GO" id="GO:0045490">
    <property type="term" value="P:pectin catabolic process"/>
    <property type="evidence" value="ECO:0000250"/>
    <property type="project" value="UniProtKB"/>
</dbReference>
<dbReference type="FunFam" id="2.160.20.10:FF:000027">
    <property type="entry name" value="Probable exopolygalacturonase X"/>
    <property type="match status" value="1"/>
</dbReference>
<dbReference type="Gene3D" id="2.160.20.10">
    <property type="entry name" value="Single-stranded right-handed beta-helix, Pectin lyase-like"/>
    <property type="match status" value="1"/>
</dbReference>
<dbReference type="InterPro" id="IPR000743">
    <property type="entry name" value="Glyco_hydro_28"/>
</dbReference>
<dbReference type="InterPro" id="IPR006626">
    <property type="entry name" value="PbH1"/>
</dbReference>
<dbReference type="InterPro" id="IPR012334">
    <property type="entry name" value="Pectin_lyas_fold"/>
</dbReference>
<dbReference type="InterPro" id="IPR011050">
    <property type="entry name" value="Pectin_lyase_fold/virulence"/>
</dbReference>
<dbReference type="PANTHER" id="PTHR31736">
    <property type="match status" value="1"/>
</dbReference>
<dbReference type="PANTHER" id="PTHR31736:SF14">
    <property type="entry name" value="EXOPOLYGALACTURONASE X-1-RELATED"/>
    <property type="match status" value="1"/>
</dbReference>
<dbReference type="Pfam" id="PF00295">
    <property type="entry name" value="Glyco_hydro_28"/>
    <property type="match status" value="1"/>
</dbReference>
<dbReference type="SMART" id="SM00710">
    <property type="entry name" value="PbH1"/>
    <property type="match status" value="5"/>
</dbReference>
<dbReference type="SUPFAM" id="SSF51126">
    <property type="entry name" value="Pectin lyase-like"/>
    <property type="match status" value="1"/>
</dbReference>
<dbReference type="PROSITE" id="PS00502">
    <property type="entry name" value="POLYGALACTURONASE"/>
    <property type="match status" value="1"/>
</dbReference>
<reference key="1">
    <citation type="journal article" date="2008" name="PLoS Genet.">
        <title>Genomic islands in the pathogenic filamentous fungus Aspergillus fumigatus.</title>
        <authorList>
            <person name="Fedorova N.D."/>
            <person name="Khaldi N."/>
            <person name="Joardar V.S."/>
            <person name="Maiti R."/>
            <person name="Amedeo P."/>
            <person name="Anderson M.J."/>
            <person name="Crabtree J."/>
            <person name="Silva J.C."/>
            <person name="Badger J.H."/>
            <person name="Albarraq A."/>
            <person name="Angiuoli S."/>
            <person name="Bussey H."/>
            <person name="Bowyer P."/>
            <person name="Cotty P.J."/>
            <person name="Dyer P.S."/>
            <person name="Egan A."/>
            <person name="Galens K."/>
            <person name="Fraser-Liggett C.M."/>
            <person name="Haas B.J."/>
            <person name="Inman J.M."/>
            <person name="Kent R."/>
            <person name="Lemieux S."/>
            <person name="Malavazi I."/>
            <person name="Orvis J."/>
            <person name="Roemer T."/>
            <person name="Ronning C.M."/>
            <person name="Sundaram J.P."/>
            <person name="Sutton G."/>
            <person name="Turner G."/>
            <person name="Venter J.C."/>
            <person name="White O.R."/>
            <person name="Whitty B.R."/>
            <person name="Youngman P."/>
            <person name="Wolfe K.H."/>
            <person name="Goldman G.H."/>
            <person name="Wortman J.R."/>
            <person name="Jiang B."/>
            <person name="Denning D.W."/>
            <person name="Nierman W.C."/>
        </authorList>
    </citation>
    <scope>NUCLEOTIDE SEQUENCE [LARGE SCALE GENOMIC DNA]</scope>
    <source>
        <strain>ATCC 1020 / DSM 3700 / CBS 544.65 / FGSC A1164 / JCM 1740 / NRRL 181 / WB 181</strain>
    </source>
</reference>